<protein>
    <recommendedName>
        <fullName>DNA-binding protein inhibitor ID-3-B</fullName>
    </recommendedName>
    <alternativeName>
        <fullName>Inhibitor of DNA binding 3-B</fullName>
        <shortName evidence="7">XIdIIa</shortName>
    </alternativeName>
    <alternativeName>
        <fullName>Inhibitor of differentiation 3-B</fullName>
    </alternativeName>
</protein>
<accession>Q7SZ28</accession>
<accession>Q91418</accession>
<dbReference type="EMBL" id="BC054166">
    <property type="protein sequence ID" value="AAH54166.1"/>
    <property type="molecule type" value="mRNA"/>
</dbReference>
<dbReference type="EMBL" id="S79040">
    <property type="protein sequence ID" value="AAD14295.1"/>
    <property type="molecule type" value="mRNA"/>
</dbReference>
<dbReference type="PIR" id="I51318">
    <property type="entry name" value="I51318"/>
</dbReference>
<dbReference type="RefSeq" id="NP_001079757.1">
    <property type="nucleotide sequence ID" value="NM_001086288.1"/>
</dbReference>
<dbReference type="SMR" id="Q7SZ28"/>
<dbReference type="DNASU" id="379447"/>
<dbReference type="GeneID" id="379447"/>
<dbReference type="KEGG" id="xla:379447"/>
<dbReference type="AGR" id="Xenbase:XB-GENE-866418"/>
<dbReference type="CTD" id="379447"/>
<dbReference type="Xenbase" id="XB-GENE-866418">
    <property type="gene designation" value="id3.S"/>
</dbReference>
<dbReference type="OMA" id="PARGCYE"/>
<dbReference type="OrthoDB" id="10047910at2759"/>
<dbReference type="Proteomes" id="UP000186698">
    <property type="component" value="Chromosome 2S"/>
</dbReference>
<dbReference type="Bgee" id="379447">
    <property type="expression patterns" value="Expressed in gastrula and 18 other cell types or tissues"/>
</dbReference>
<dbReference type="GO" id="GO:0005737">
    <property type="term" value="C:cytoplasm"/>
    <property type="evidence" value="ECO:0007669"/>
    <property type="project" value="InterPro"/>
</dbReference>
<dbReference type="GO" id="GO:0005634">
    <property type="term" value="C:nucleus"/>
    <property type="evidence" value="ECO:0000318"/>
    <property type="project" value="GO_Central"/>
</dbReference>
<dbReference type="GO" id="GO:0043425">
    <property type="term" value="F:bHLH transcription factor binding"/>
    <property type="evidence" value="ECO:0000250"/>
    <property type="project" value="UniProtKB"/>
</dbReference>
<dbReference type="GO" id="GO:0046983">
    <property type="term" value="F:protein dimerization activity"/>
    <property type="evidence" value="ECO:0007669"/>
    <property type="project" value="InterPro"/>
</dbReference>
<dbReference type="GO" id="GO:0003714">
    <property type="term" value="F:transcription corepressor activity"/>
    <property type="evidence" value="ECO:0000318"/>
    <property type="project" value="GO_Central"/>
</dbReference>
<dbReference type="GO" id="GO:0032922">
    <property type="term" value="P:circadian regulation of gene expression"/>
    <property type="evidence" value="ECO:0007669"/>
    <property type="project" value="TreeGrafter"/>
</dbReference>
<dbReference type="GO" id="GO:0043392">
    <property type="term" value="P:negative regulation of DNA binding"/>
    <property type="evidence" value="ECO:0000250"/>
    <property type="project" value="UniProtKB"/>
</dbReference>
<dbReference type="GO" id="GO:0045892">
    <property type="term" value="P:negative regulation of DNA-templated transcription"/>
    <property type="evidence" value="ECO:0000250"/>
    <property type="project" value="UniProtKB"/>
</dbReference>
<dbReference type="GO" id="GO:0000122">
    <property type="term" value="P:negative regulation of transcription by RNA polymerase II"/>
    <property type="evidence" value="ECO:0000250"/>
    <property type="project" value="UniProtKB"/>
</dbReference>
<dbReference type="GO" id="GO:0014029">
    <property type="term" value="P:neural crest formation"/>
    <property type="evidence" value="ECO:0000250"/>
    <property type="project" value="UniProtKB"/>
</dbReference>
<dbReference type="GO" id="GO:0030182">
    <property type="term" value="P:neuron differentiation"/>
    <property type="evidence" value="ECO:0000318"/>
    <property type="project" value="GO_Central"/>
</dbReference>
<dbReference type="GO" id="GO:0051726">
    <property type="term" value="P:regulation of cell cycle"/>
    <property type="evidence" value="ECO:0000250"/>
    <property type="project" value="UniProtKB"/>
</dbReference>
<dbReference type="CDD" id="cd19693">
    <property type="entry name" value="bHLH_dnHLH_ID3"/>
    <property type="match status" value="1"/>
</dbReference>
<dbReference type="FunFam" id="4.10.280.10:FF:000039">
    <property type="entry name" value="DNA-binding protein inhibitor ID-3"/>
    <property type="match status" value="1"/>
</dbReference>
<dbReference type="Gene3D" id="4.10.280.10">
    <property type="entry name" value="Helix-loop-helix DNA-binding domain"/>
    <property type="match status" value="1"/>
</dbReference>
<dbReference type="InterPro" id="IPR011598">
    <property type="entry name" value="bHLH_dom"/>
</dbReference>
<dbReference type="InterPro" id="IPR026052">
    <property type="entry name" value="DNA-bd_prot-inh"/>
</dbReference>
<dbReference type="InterPro" id="IPR036638">
    <property type="entry name" value="HLH_DNA-bd_sf"/>
</dbReference>
<dbReference type="PANTHER" id="PTHR11723">
    <property type="entry name" value="DNA-BINDING PROTEIN INHIBITOR"/>
    <property type="match status" value="1"/>
</dbReference>
<dbReference type="PANTHER" id="PTHR11723:SF16">
    <property type="entry name" value="DNA-BINDING PROTEIN INHIBITOR ID-3"/>
    <property type="match status" value="1"/>
</dbReference>
<dbReference type="Pfam" id="PF00010">
    <property type="entry name" value="HLH"/>
    <property type="match status" value="1"/>
</dbReference>
<dbReference type="SMART" id="SM00353">
    <property type="entry name" value="HLH"/>
    <property type="match status" value="1"/>
</dbReference>
<dbReference type="SUPFAM" id="SSF47459">
    <property type="entry name" value="HLH, helix-loop-helix DNA-binding domain"/>
    <property type="match status" value="1"/>
</dbReference>
<dbReference type="PROSITE" id="PS50888">
    <property type="entry name" value="BHLH"/>
    <property type="match status" value="1"/>
</dbReference>
<keyword id="KW-0090">Biological rhythms</keyword>
<keyword id="KW-0217">Developmental protein</keyword>
<keyword id="KW-0539">Nucleus</keyword>
<keyword id="KW-1185">Reference proteome</keyword>
<keyword id="KW-0678">Repressor</keyword>
<keyword id="KW-0804">Transcription</keyword>
<keyword id="KW-0805">Transcription regulation</keyword>
<gene>
    <name type="primary">id3-b</name>
    <name type="synonym">id3</name>
</gene>
<organism>
    <name type="scientific">Xenopus laevis</name>
    <name type="common">African clawed frog</name>
    <dbReference type="NCBI Taxonomy" id="8355"/>
    <lineage>
        <taxon>Eukaryota</taxon>
        <taxon>Metazoa</taxon>
        <taxon>Chordata</taxon>
        <taxon>Craniata</taxon>
        <taxon>Vertebrata</taxon>
        <taxon>Euteleostomi</taxon>
        <taxon>Amphibia</taxon>
        <taxon>Batrachia</taxon>
        <taxon>Anura</taxon>
        <taxon>Pipoidea</taxon>
        <taxon>Pipidae</taxon>
        <taxon>Xenopodinae</taxon>
        <taxon>Xenopus</taxon>
        <taxon>Xenopus</taxon>
    </lineage>
</organism>
<name>ID3B_XENLA</name>
<proteinExistence type="inferred from homology"/>
<reference evidence="8" key="1">
    <citation type="submission" date="2003-06" db="EMBL/GenBank/DDBJ databases">
        <authorList>
            <consortium name="NIH - Xenopus Gene Collection (XGC) project"/>
        </authorList>
    </citation>
    <scope>NUCLEOTIDE SEQUENCE [LARGE SCALE MRNA]</scope>
    <source>
        <tissue evidence="8">Tadpole</tissue>
    </source>
</reference>
<reference evidence="6 7" key="2">
    <citation type="journal article" date="1995" name="Mech. Dev.">
        <title>Id gene activity during Xenopus embryogenesis.</title>
        <authorList>
            <person name="Zhang H."/>
            <person name="Reynaud S."/>
            <person name="Kloc M."/>
            <person name="Etkin L.D."/>
            <person name="Spohr G."/>
        </authorList>
    </citation>
    <scope>NUCLEOTIDE SEQUENCE [MRNA] OF 42-118</scope>
    <source>
        <tissue evidence="5">Neurula</tissue>
    </source>
</reference>
<sequence length="118" mass="12886">MKAISPVRSMSSCYQAVCCLSEQSLSIARGSSLKGAGIDETMGLLYDMNGCYSKLKELVPGIPQGSKLSQVEILQHVIDYIFDLQIVLGEDQQQNSILNLQKSDFSELATQGDARVCH</sequence>
<comment type="function">
    <text evidence="1">Transcriptional regulator (lacking a basic DNA binding domain) which negatively regulates the basic helix-loop-helix (bHLH) transcription factors by forming heterodimers and inhibiting their DNA binding and transcriptional activity. Influences cell fate decisions in the embryo by sequestering and blocking the activity of the bHLH transcription factors that control these decisions. Inhibits the binding of myogenic bHLH-containing complexes to E-box DNA, thereby preventing activation of muscle-specific target genes. Also inhibits the activity of neurogenic factor neurod1/neuroD. Plays a role in cell cycle progression and survival of neural crest progenitors; binding to either hes4-B/hairy2b or stat3 blocks the formation of transcription factor complexes and the repressor function of hes4-B/hairy2B, to allow neural crest progenitors to differentiate. May play a role in the regulation of the circadian rhythm (By similarity).</text>
</comment>
<comment type="subunit">
    <text evidence="3">Homodimer (By similarity). Heterodimer with other HLH proteins. Interacts (via HLH domain) with the bHLH protein hes4/hairy2 (via Orange domain). Interacts with stat3 (By similarity).</text>
</comment>
<comment type="subcellular location">
    <subcellularLocation>
        <location evidence="2 4">Nucleus</location>
    </subcellularLocation>
</comment>
<feature type="chain" id="PRO_0000390725" description="DNA-binding protein inhibitor ID-3-B">
    <location>
        <begin position="1"/>
        <end position="118"/>
    </location>
</feature>
<feature type="domain" description="bHLH" evidence="4">
    <location>
        <begin position="32"/>
        <end position="84"/>
    </location>
</feature>
<feature type="sequence conflict" description="In Ref. 2; AAD14295." evidence="6" ref="2">
    <original>S</original>
    <variation>A</variation>
    <location>
        <position position="66"/>
    </location>
</feature>
<feature type="sequence conflict" description="In Ref. 2; AAD14295." evidence="6" ref="2">
    <original>E</original>
    <variation>S</variation>
    <location>
        <position position="72"/>
    </location>
</feature>
<feature type="sequence conflict" description="In Ref. 2; AAD14295." evidence="6" ref="2">
    <original>L</original>
    <variation>R</variation>
    <location>
        <position position="100"/>
    </location>
</feature>
<feature type="sequence conflict" description="In Ref. 2; AAD14295." evidence="6" ref="2">
    <original>D</original>
    <variation>Y</variation>
    <location>
        <position position="104"/>
    </location>
</feature>
<evidence type="ECO:0000250" key="1"/>
<evidence type="ECO:0000250" key="2">
    <source>
        <dbReference type="UniProtKB" id="Q02535"/>
    </source>
</evidence>
<evidence type="ECO:0000250" key="3">
    <source>
        <dbReference type="UniProtKB" id="Q91399"/>
    </source>
</evidence>
<evidence type="ECO:0000255" key="4">
    <source>
        <dbReference type="PROSITE-ProRule" id="PRU00981"/>
    </source>
</evidence>
<evidence type="ECO:0000269" key="5">
    <source>
    </source>
</evidence>
<evidence type="ECO:0000305" key="6"/>
<evidence type="ECO:0000312" key="7">
    <source>
        <dbReference type="EMBL" id="AAD14295.1"/>
    </source>
</evidence>
<evidence type="ECO:0000312" key="8">
    <source>
        <dbReference type="EMBL" id="AAH54166.1"/>
    </source>
</evidence>